<gene>
    <name evidence="1" type="primary">purC</name>
    <name type="ordered locus">RAF_ORF0274</name>
</gene>
<name>PUR7_RICAE</name>
<accession>C3PMR4</accession>
<organism>
    <name type="scientific">Rickettsia africae (strain ESF-5)</name>
    <dbReference type="NCBI Taxonomy" id="347255"/>
    <lineage>
        <taxon>Bacteria</taxon>
        <taxon>Pseudomonadati</taxon>
        <taxon>Pseudomonadota</taxon>
        <taxon>Alphaproteobacteria</taxon>
        <taxon>Rickettsiales</taxon>
        <taxon>Rickettsiaceae</taxon>
        <taxon>Rickettsieae</taxon>
        <taxon>Rickettsia</taxon>
        <taxon>spotted fever group</taxon>
    </lineage>
</organism>
<reference key="1">
    <citation type="journal article" date="2009" name="BMC Genomics">
        <title>Analysis of the Rickettsia africae genome reveals that virulence acquisition in Rickettsia species may be explained by genome reduction.</title>
        <authorList>
            <person name="Fournier P.-E."/>
            <person name="El Karkouri K."/>
            <person name="Leroy Q."/>
            <person name="Robert C."/>
            <person name="Giumelli B."/>
            <person name="Renesto P."/>
            <person name="Socolovschi C."/>
            <person name="Parola P."/>
            <person name="Audic S."/>
            <person name="Raoult D."/>
        </authorList>
    </citation>
    <scope>NUCLEOTIDE SEQUENCE [LARGE SCALE GENOMIC DNA]</scope>
    <source>
        <strain>ESF-5</strain>
    </source>
</reference>
<proteinExistence type="inferred from homology"/>
<comment type="catalytic activity">
    <reaction evidence="1">
        <text>5-amino-1-(5-phospho-D-ribosyl)imidazole-4-carboxylate + L-aspartate + ATP = (2S)-2-[5-amino-1-(5-phospho-beta-D-ribosyl)imidazole-4-carboxamido]succinate + ADP + phosphate + 2 H(+)</text>
        <dbReference type="Rhea" id="RHEA:22628"/>
        <dbReference type="ChEBI" id="CHEBI:15378"/>
        <dbReference type="ChEBI" id="CHEBI:29991"/>
        <dbReference type="ChEBI" id="CHEBI:30616"/>
        <dbReference type="ChEBI" id="CHEBI:43474"/>
        <dbReference type="ChEBI" id="CHEBI:58443"/>
        <dbReference type="ChEBI" id="CHEBI:77657"/>
        <dbReference type="ChEBI" id="CHEBI:456216"/>
        <dbReference type="EC" id="6.3.2.6"/>
    </reaction>
</comment>
<comment type="pathway">
    <text evidence="1">Purine metabolism; IMP biosynthesis via de novo pathway; 5-amino-1-(5-phospho-D-ribosyl)imidazole-4-carboxamide from 5-amino-1-(5-phospho-D-ribosyl)imidazole-4-carboxylate: step 1/2.</text>
</comment>
<comment type="similarity">
    <text evidence="1">Belongs to the SAICAR synthetase family.</text>
</comment>
<protein>
    <recommendedName>
        <fullName evidence="1">Phosphoribosylaminoimidazole-succinocarboxamide synthase</fullName>
        <ecNumber evidence="1">6.3.2.6</ecNumber>
    </recommendedName>
    <alternativeName>
        <fullName evidence="1">SAICAR synthetase</fullName>
    </alternativeName>
</protein>
<feature type="chain" id="PRO_1000203239" description="Phosphoribosylaminoimidazole-succinocarboxamide synthase">
    <location>
        <begin position="1"/>
        <end position="236"/>
    </location>
</feature>
<dbReference type="EC" id="6.3.2.6" evidence="1"/>
<dbReference type="EMBL" id="CP001612">
    <property type="protein sequence ID" value="ACP53224.1"/>
    <property type="molecule type" value="Genomic_DNA"/>
</dbReference>
<dbReference type="RefSeq" id="WP_004996420.1">
    <property type="nucleotide sequence ID" value="NC_012633.1"/>
</dbReference>
<dbReference type="SMR" id="C3PMR4"/>
<dbReference type="KEGG" id="raf:RAF_ORF0274"/>
<dbReference type="HOGENOM" id="CLU_061495_2_0_5"/>
<dbReference type="UniPathway" id="UPA00074">
    <property type="reaction ID" value="UER00131"/>
</dbReference>
<dbReference type="Proteomes" id="UP000002305">
    <property type="component" value="Chromosome"/>
</dbReference>
<dbReference type="GO" id="GO:0005829">
    <property type="term" value="C:cytosol"/>
    <property type="evidence" value="ECO:0007669"/>
    <property type="project" value="TreeGrafter"/>
</dbReference>
<dbReference type="GO" id="GO:0005524">
    <property type="term" value="F:ATP binding"/>
    <property type="evidence" value="ECO:0007669"/>
    <property type="project" value="UniProtKB-KW"/>
</dbReference>
<dbReference type="GO" id="GO:0004639">
    <property type="term" value="F:phosphoribosylaminoimidazolesuccinocarboxamide synthase activity"/>
    <property type="evidence" value="ECO:0007669"/>
    <property type="project" value="UniProtKB-UniRule"/>
</dbReference>
<dbReference type="GO" id="GO:0006189">
    <property type="term" value="P:'de novo' IMP biosynthetic process"/>
    <property type="evidence" value="ECO:0007669"/>
    <property type="project" value="UniProtKB-UniRule"/>
</dbReference>
<dbReference type="GO" id="GO:0009236">
    <property type="term" value="P:cobalamin biosynthetic process"/>
    <property type="evidence" value="ECO:0007669"/>
    <property type="project" value="InterPro"/>
</dbReference>
<dbReference type="CDD" id="cd01415">
    <property type="entry name" value="SAICAR_synt_PurC"/>
    <property type="match status" value="1"/>
</dbReference>
<dbReference type="Gene3D" id="3.30.470.20">
    <property type="entry name" value="ATP-grasp fold, B domain"/>
    <property type="match status" value="1"/>
</dbReference>
<dbReference type="Gene3D" id="3.30.200.20">
    <property type="entry name" value="Phosphorylase Kinase, domain 1"/>
    <property type="match status" value="1"/>
</dbReference>
<dbReference type="HAMAP" id="MF_00137">
    <property type="entry name" value="SAICAR_synth"/>
    <property type="match status" value="1"/>
</dbReference>
<dbReference type="InterPro" id="IPR028923">
    <property type="entry name" value="SAICAR_synt/ADE2_N"/>
</dbReference>
<dbReference type="InterPro" id="IPR033934">
    <property type="entry name" value="SAICAR_synt_PurC"/>
</dbReference>
<dbReference type="InterPro" id="IPR050089">
    <property type="entry name" value="SAICAR_synthetase"/>
</dbReference>
<dbReference type="PANTHER" id="PTHR43599">
    <property type="entry name" value="MULTIFUNCTIONAL PROTEIN ADE2"/>
    <property type="match status" value="1"/>
</dbReference>
<dbReference type="PANTHER" id="PTHR43599:SF3">
    <property type="entry name" value="SI:DKEY-6E2.2"/>
    <property type="match status" value="1"/>
</dbReference>
<dbReference type="Pfam" id="PF01259">
    <property type="entry name" value="SAICAR_synt"/>
    <property type="match status" value="1"/>
</dbReference>
<dbReference type="SUPFAM" id="SSF56104">
    <property type="entry name" value="SAICAR synthase-like"/>
    <property type="match status" value="1"/>
</dbReference>
<keyword id="KW-0067">ATP-binding</keyword>
<keyword id="KW-0436">Ligase</keyword>
<keyword id="KW-0547">Nucleotide-binding</keyword>
<keyword id="KW-0658">Purine biosynthesis</keyword>
<sequence length="236" mass="27436">MKKKLYEGSSKILYSAEEDFLLIMAFSDKAILETGEIVDISGKGVLNNNISSFLMDKLEMIGIENHFIEKINMREQLIQYVEVFPIQVIISSVACSRFVKEFGIDEGYVFDKPIIDFKVRSREFKYPIVNEYQILNFGWLTRDEIKAVKEQALRIYDFLSGLFIGVGIRLVECKLEFGRVFNGEESIIMLTDEISPDNCRLWHINSNEKLGFELLEKEPNKVFESYQLIADRLKEK</sequence>
<evidence type="ECO:0000255" key="1">
    <source>
        <dbReference type="HAMAP-Rule" id="MF_00137"/>
    </source>
</evidence>